<protein>
    <recommendedName>
        <fullName>Homeobox-leucine zipper protein HOX23</fullName>
    </recommendedName>
    <alternativeName>
        <fullName>HD-ZIP protein HOX23</fullName>
    </alternativeName>
    <alternativeName>
        <fullName>Homeodomain transcription factor HOX23</fullName>
    </alternativeName>
    <alternativeName>
        <fullName>OsHox23</fullName>
    </alternativeName>
</protein>
<evidence type="ECO:0000250" key="1"/>
<evidence type="ECO:0000255" key="2">
    <source>
        <dbReference type="PROSITE-ProRule" id="PRU00108"/>
    </source>
</evidence>
<evidence type="ECO:0000256" key="3">
    <source>
        <dbReference type="SAM" id="MobiDB-lite"/>
    </source>
</evidence>
<evidence type="ECO:0000269" key="4">
    <source>
    </source>
</evidence>
<evidence type="ECO:0000305" key="5"/>
<comment type="function">
    <text evidence="1">Probable transcription factor.</text>
</comment>
<comment type="subcellular location">
    <subcellularLocation>
        <location evidence="5">Nucleus</location>
    </subcellularLocation>
</comment>
<comment type="tissue specificity">
    <text evidence="4">Expressed in seedlings, roots, stems, leaf sheaths and panicles.</text>
</comment>
<comment type="similarity">
    <text evidence="5">Belongs to the HD-ZIP homeobox family. Class I subfamily.</text>
</comment>
<gene>
    <name type="primary">HOX23</name>
    <name type="ordered locus">Os10g0404900</name>
    <name type="ordered locus">LOC_Os10g26500</name>
    <name type="ORF">OSJNBb0044I14.6</name>
</gene>
<organism>
    <name type="scientific">Oryza sativa subsp. japonica</name>
    <name type="common">Rice</name>
    <dbReference type="NCBI Taxonomy" id="39947"/>
    <lineage>
        <taxon>Eukaryota</taxon>
        <taxon>Viridiplantae</taxon>
        <taxon>Streptophyta</taxon>
        <taxon>Embryophyta</taxon>
        <taxon>Tracheophyta</taxon>
        <taxon>Spermatophyta</taxon>
        <taxon>Magnoliopsida</taxon>
        <taxon>Liliopsida</taxon>
        <taxon>Poales</taxon>
        <taxon>Poaceae</taxon>
        <taxon>BOP clade</taxon>
        <taxon>Oryzoideae</taxon>
        <taxon>Oryzeae</taxon>
        <taxon>Oryzinae</taxon>
        <taxon>Oryza</taxon>
        <taxon>Oryza sativa</taxon>
    </lineage>
</organism>
<accession>Q94GL5</accession>
<accession>Q7XEW0</accession>
<name>HOX23_ORYSJ</name>
<proteinExistence type="evidence at transcript level"/>
<sequence>MASNGAAAGAMAPFFPPNFLLQMQQPLPLHHQHLQDHAHGGHGGHHLLPPPPPSLSPFLPDLAMDAPPPPMYEASGGDGGGGGAASEDEEDGCGGGGGGGGGEKKRRLSVEQVRTLERSFESGNKLEPERKAQLARALGLQPRQVAIWFQNRRARWKTKQLEKDFDALRRQLDAARAENDALLSLNSKLHAEIVALKGGAAAAGGGGSSCRQEAASELINLNVKETEASCSNRSENSSEINLDISRPAPPPPPPPANESPVNRGIPFYASIGRGGAGGVDIDQLLLRGGHSPSPAAVTTPPPPKMELGITGNGGGADAAAAGAGSFGGLLCGAVDEQPPFWPWADGHHHFH</sequence>
<reference key="1">
    <citation type="journal article" date="2003" name="Science">
        <title>In-depth view of structure, activity, and evolution of rice chromosome 10.</title>
        <authorList>
            <person name="Yu Y."/>
            <person name="Rambo T."/>
            <person name="Currie J."/>
            <person name="Saski C."/>
            <person name="Kim H.-R."/>
            <person name="Collura K."/>
            <person name="Thompson S."/>
            <person name="Simmons J."/>
            <person name="Yang T.-J."/>
            <person name="Nah G."/>
            <person name="Patel A.J."/>
            <person name="Thurmond S."/>
            <person name="Henry D."/>
            <person name="Oates R."/>
            <person name="Palmer M."/>
            <person name="Pries G."/>
            <person name="Gibson J."/>
            <person name="Anderson H."/>
            <person name="Paradkar M."/>
            <person name="Crane L."/>
            <person name="Dale J."/>
            <person name="Carver M.B."/>
            <person name="Wood T."/>
            <person name="Frisch D."/>
            <person name="Engler F."/>
            <person name="Soderlund C."/>
            <person name="Palmer L.E."/>
            <person name="Teytelman L."/>
            <person name="Nascimento L."/>
            <person name="De la Bastide M."/>
            <person name="Spiegel L."/>
            <person name="Ware D."/>
            <person name="O'Shaughnessy A."/>
            <person name="Dike S."/>
            <person name="Dedhia N."/>
            <person name="Preston R."/>
            <person name="Huang E."/>
            <person name="Ferraro K."/>
            <person name="Kuit K."/>
            <person name="Miller B."/>
            <person name="Zutavern T."/>
            <person name="Katzenberger F."/>
            <person name="Muller S."/>
            <person name="Balija V."/>
            <person name="Martienssen R.A."/>
            <person name="Stein L."/>
            <person name="Minx P."/>
            <person name="Johnson D."/>
            <person name="Cordum H."/>
            <person name="Mardis E."/>
            <person name="Cheng Z."/>
            <person name="Jiang J."/>
            <person name="Wilson R."/>
            <person name="McCombie W.R."/>
            <person name="Wing R.A."/>
            <person name="Yuan Q."/>
            <person name="Ouyang S."/>
            <person name="Liu J."/>
            <person name="Jones K.M."/>
            <person name="Gansberger K."/>
            <person name="Moffat K."/>
            <person name="Hill J."/>
            <person name="Tsitrin T."/>
            <person name="Overton L."/>
            <person name="Bera J."/>
            <person name="Kim M."/>
            <person name="Jin S."/>
            <person name="Tallon L."/>
            <person name="Ciecko A."/>
            <person name="Pai G."/>
            <person name="Van Aken S."/>
            <person name="Utterback T."/>
            <person name="Reidmuller S."/>
            <person name="Bormann J."/>
            <person name="Feldblyum T."/>
            <person name="Hsiao J."/>
            <person name="Zismann V."/>
            <person name="Blunt S."/>
            <person name="de Vazeille A.R."/>
            <person name="Shaffer T."/>
            <person name="Koo H."/>
            <person name="Suh B."/>
            <person name="Yang Q."/>
            <person name="Haas B."/>
            <person name="Peterson J."/>
            <person name="Pertea M."/>
            <person name="Volfovsky N."/>
            <person name="Wortman J."/>
            <person name="White O."/>
            <person name="Salzberg S.L."/>
            <person name="Fraser C.M."/>
            <person name="Buell C.R."/>
            <person name="Messing J."/>
            <person name="Song R."/>
            <person name="Fuks G."/>
            <person name="Llaca V."/>
            <person name="Kovchak S."/>
            <person name="Young S."/>
            <person name="Bowers J.E."/>
            <person name="Paterson A.H."/>
            <person name="Johns M.A."/>
            <person name="Mao L."/>
            <person name="Pan H."/>
            <person name="Dean R.A."/>
        </authorList>
    </citation>
    <scope>NUCLEOTIDE SEQUENCE [LARGE SCALE GENOMIC DNA]</scope>
    <source>
        <strain>cv. Nipponbare</strain>
    </source>
</reference>
<reference key="2">
    <citation type="journal article" date="2005" name="Nature">
        <title>The map-based sequence of the rice genome.</title>
        <authorList>
            <consortium name="International rice genome sequencing project (IRGSP)"/>
        </authorList>
    </citation>
    <scope>NUCLEOTIDE SEQUENCE [LARGE SCALE GENOMIC DNA]</scope>
    <source>
        <strain>cv. Nipponbare</strain>
    </source>
</reference>
<reference key="3">
    <citation type="journal article" date="2008" name="Nucleic Acids Res.">
        <title>The rice annotation project database (RAP-DB): 2008 update.</title>
        <authorList>
            <consortium name="The rice annotation project (RAP)"/>
        </authorList>
    </citation>
    <scope>GENOME REANNOTATION</scope>
    <source>
        <strain>cv. Nipponbare</strain>
    </source>
</reference>
<reference key="4">
    <citation type="journal article" date="2013" name="Rice">
        <title>Improvement of the Oryza sativa Nipponbare reference genome using next generation sequence and optical map data.</title>
        <authorList>
            <person name="Kawahara Y."/>
            <person name="de la Bastide M."/>
            <person name="Hamilton J.P."/>
            <person name="Kanamori H."/>
            <person name="McCombie W.R."/>
            <person name="Ouyang S."/>
            <person name="Schwartz D.C."/>
            <person name="Tanaka T."/>
            <person name="Wu J."/>
            <person name="Zhou S."/>
            <person name="Childs K.L."/>
            <person name="Davidson R.M."/>
            <person name="Lin H."/>
            <person name="Quesada-Ocampo L."/>
            <person name="Vaillancourt B."/>
            <person name="Sakai H."/>
            <person name="Lee S.S."/>
            <person name="Kim J."/>
            <person name="Numa H."/>
            <person name="Itoh T."/>
            <person name="Buell C.R."/>
            <person name="Matsumoto T."/>
        </authorList>
    </citation>
    <scope>GENOME REANNOTATION</scope>
    <source>
        <strain>cv. Nipponbare</strain>
    </source>
</reference>
<reference key="5">
    <citation type="journal article" date="2008" name="Plant Mol. Biol.">
        <title>A genome-wide survey of HD-Zip genes in rice and analysis of drought-responsive family members.</title>
        <authorList>
            <person name="Agalou A."/>
            <person name="Purwantomo S."/>
            <person name="Oevernaes E."/>
            <person name="Johannesson H."/>
            <person name="Zhu X."/>
            <person name="Estiati A."/>
            <person name="de Kam R.J."/>
            <person name="Engstroem P."/>
            <person name="Slamet-Loedin I.H."/>
            <person name="Zhu Z."/>
            <person name="Wang M."/>
            <person name="Xiong L."/>
            <person name="Meijer A.H."/>
            <person name="Ouwerkerk P.B.F."/>
        </authorList>
    </citation>
    <scope>TISSUE SPECIFICITY</scope>
    <scope>GENE FAMILY</scope>
    <scope>NOMENCLATURE</scope>
</reference>
<dbReference type="EMBL" id="AC090487">
    <property type="protein sequence ID" value="AAK92664.1"/>
    <property type="molecule type" value="Genomic_DNA"/>
</dbReference>
<dbReference type="EMBL" id="DP000086">
    <property type="protein sequence ID" value="AAP53678.1"/>
    <property type="molecule type" value="Genomic_DNA"/>
</dbReference>
<dbReference type="EMBL" id="AP008216">
    <property type="protein sequence ID" value="BAF26470.1"/>
    <property type="molecule type" value="Genomic_DNA"/>
</dbReference>
<dbReference type="EMBL" id="AP014966">
    <property type="status" value="NOT_ANNOTATED_CDS"/>
    <property type="molecule type" value="Genomic_DNA"/>
</dbReference>
<dbReference type="SMR" id="Q94GL5"/>
<dbReference type="FunCoup" id="Q94GL5">
    <property type="interactions" value="4"/>
</dbReference>
<dbReference type="PaxDb" id="39947-Q94GL5"/>
<dbReference type="KEGG" id="dosa:Os10g0404900"/>
<dbReference type="eggNOG" id="KOG0483">
    <property type="taxonomic scope" value="Eukaryota"/>
</dbReference>
<dbReference type="HOGENOM" id="CLU_060842_4_1_1"/>
<dbReference type="InParanoid" id="Q94GL5"/>
<dbReference type="Proteomes" id="UP000000763">
    <property type="component" value="Chromosome 10"/>
</dbReference>
<dbReference type="Proteomes" id="UP000059680">
    <property type="component" value="Chromosome 10"/>
</dbReference>
<dbReference type="GO" id="GO:0005634">
    <property type="term" value="C:nucleus"/>
    <property type="evidence" value="ECO:0000318"/>
    <property type="project" value="GO_Central"/>
</dbReference>
<dbReference type="GO" id="GO:0000981">
    <property type="term" value="F:DNA-binding transcription factor activity, RNA polymerase II-specific"/>
    <property type="evidence" value="ECO:0007669"/>
    <property type="project" value="InterPro"/>
</dbReference>
<dbReference type="GO" id="GO:0043565">
    <property type="term" value="F:sequence-specific DNA binding"/>
    <property type="evidence" value="ECO:0000318"/>
    <property type="project" value="GO_Central"/>
</dbReference>
<dbReference type="GO" id="GO:0045893">
    <property type="term" value="P:positive regulation of DNA-templated transcription"/>
    <property type="evidence" value="ECO:0000318"/>
    <property type="project" value="GO_Central"/>
</dbReference>
<dbReference type="CDD" id="cd00086">
    <property type="entry name" value="homeodomain"/>
    <property type="match status" value="1"/>
</dbReference>
<dbReference type="FunFam" id="1.10.10.60:FF:000200">
    <property type="entry name" value="Homeobox-leucine zipper protein ATHB-13"/>
    <property type="match status" value="1"/>
</dbReference>
<dbReference type="Gene3D" id="1.10.10.60">
    <property type="entry name" value="Homeodomain-like"/>
    <property type="match status" value="1"/>
</dbReference>
<dbReference type="InterPro" id="IPR001356">
    <property type="entry name" value="HD"/>
</dbReference>
<dbReference type="InterPro" id="IPR045224">
    <property type="entry name" value="HDZip_class_I_plant"/>
</dbReference>
<dbReference type="InterPro" id="IPR017970">
    <property type="entry name" value="Homeobox_CS"/>
</dbReference>
<dbReference type="InterPro" id="IPR009057">
    <property type="entry name" value="Homeodomain-like_sf"/>
</dbReference>
<dbReference type="InterPro" id="IPR000047">
    <property type="entry name" value="HTH_motif"/>
</dbReference>
<dbReference type="InterPro" id="IPR003106">
    <property type="entry name" value="Leu_zip_homeo"/>
</dbReference>
<dbReference type="PANTHER" id="PTHR24326">
    <property type="entry name" value="HOMEOBOX-LEUCINE ZIPPER PROTEIN"/>
    <property type="match status" value="1"/>
</dbReference>
<dbReference type="PANTHER" id="PTHR24326:SF225">
    <property type="entry name" value="HOMEOBOX-LEUCINE ZIPPER PROTEIN HOX23"/>
    <property type="match status" value="1"/>
</dbReference>
<dbReference type="Pfam" id="PF02183">
    <property type="entry name" value="HALZ"/>
    <property type="match status" value="1"/>
</dbReference>
<dbReference type="Pfam" id="PF00046">
    <property type="entry name" value="Homeodomain"/>
    <property type="match status" value="1"/>
</dbReference>
<dbReference type="PRINTS" id="PR00031">
    <property type="entry name" value="HTHREPRESSR"/>
</dbReference>
<dbReference type="SMART" id="SM00389">
    <property type="entry name" value="HOX"/>
    <property type="match status" value="1"/>
</dbReference>
<dbReference type="SUPFAM" id="SSF46689">
    <property type="entry name" value="Homeodomain-like"/>
    <property type="match status" value="1"/>
</dbReference>
<dbReference type="PROSITE" id="PS00027">
    <property type="entry name" value="HOMEOBOX_1"/>
    <property type="match status" value="1"/>
</dbReference>
<dbReference type="PROSITE" id="PS50071">
    <property type="entry name" value="HOMEOBOX_2"/>
    <property type="match status" value="1"/>
</dbReference>
<feature type="chain" id="PRO_0000331719" description="Homeobox-leucine zipper protein HOX23">
    <location>
        <begin position="1"/>
        <end position="351"/>
    </location>
</feature>
<feature type="DNA-binding region" description="Homeobox" evidence="2">
    <location>
        <begin position="101"/>
        <end position="160"/>
    </location>
</feature>
<feature type="region of interest" description="Disordered" evidence="3">
    <location>
        <begin position="34"/>
        <end position="128"/>
    </location>
</feature>
<feature type="region of interest" description="Leucine-zipper">
    <location>
        <begin position="159"/>
        <end position="203"/>
    </location>
</feature>
<feature type="region of interest" description="Disordered" evidence="3">
    <location>
        <begin position="227"/>
        <end position="263"/>
    </location>
</feature>
<feature type="compositionally biased region" description="Low complexity" evidence="3">
    <location>
        <begin position="56"/>
        <end position="65"/>
    </location>
</feature>
<feature type="compositionally biased region" description="Basic and acidic residues" evidence="3">
    <location>
        <begin position="114"/>
        <end position="128"/>
    </location>
</feature>
<feature type="compositionally biased region" description="Polar residues" evidence="3">
    <location>
        <begin position="228"/>
        <end position="240"/>
    </location>
</feature>
<feature type="compositionally biased region" description="Pro residues" evidence="3">
    <location>
        <begin position="247"/>
        <end position="257"/>
    </location>
</feature>
<keyword id="KW-0238">DNA-binding</keyword>
<keyword id="KW-0371">Homeobox</keyword>
<keyword id="KW-0539">Nucleus</keyword>
<keyword id="KW-1185">Reference proteome</keyword>
<keyword id="KW-0804">Transcription</keyword>
<keyword id="KW-0805">Transcription regulation</keyword>